<feature type="chain" id="PRO_0000318505" description="Deoxynucleotidyltransferase terminal-interacting protein 2">
    <location>
        <begin position="1"/>
        <end position="756"/>
    </location>
</feature>
<feature type="region of interest" description="Disordered" evidence="2">
    <location>
        <begin position="1"/>
        <end position="99"/>
    </location>
</feature>
<feature type="region of interest" description="Disordered" evidence="2">
    <location>
        <begin position="156"/>
        <end position="261"/>
    </location>
</feature>
<feature type="region of interest" description="Disordered" evidence="2">
    <location>
        <begin position="510"/>
        <end position="547"/>
    </location>
</feature>
<feature type="region of interest" description="TdBR region; mediates interaction with DNTT">
    <location>
        <begin position="548"/>
        <end position="605"/>
    </location>
</feature>
<feature type="coiled-coil region" evidence="1">
    <location>
        <begin position="505"/>
        <end position="542"/>
    </location>
</feature>
<feature type="compositionally biased region" description="Low complexity" evidence="2">
    <location>
        <begin position="9"/>
        <end position="21"/>
    </location>
</feature>
<feature type="compositionally biased region" description="Polar residues" evidence="2">
    <location>
        <begin position="35"/>
        <end position="55"/>
    </location>
</feature>
<feature type="compositionally biased region" description="Polar residues" evidence="2">
    <location>
        <begin position="80"/>
        <end position="96"/>
    </location>
</feature>
<feature type="compositionally biased region" description="Basic residues" evidence="2">
    <location>
        <begin position="201"/>
        <end position="211"/>
    </location>
</feature>
<feature type="compositionally biased region" description="Polar residues" evidence="2">
    <location>
        <begin position="242"/>
        <end position="256"/>
    </location>
</feature>
<feature type="modified residue" description="Phosphoserine" evidence="17 19">
    <location>
        <position position="21"/>
    </location>
</feature>
<feature type="modified residue" description="Phosphoserine" evidence="15 17 19 21">
    <location>
        <position position="117"/>
    </location>
</feature>
<feature type="modified residue" description="Phosphothreonine" evidence="17">
    <location>
        <position position="129"/>
    </location>
</feature>
<feature type="modified residue" description="Phosphoserine" evidence="16 17 18 19 20 21">
    <location>
        <position position="141"/>
    </location>
</feature>
<feature type="modified residue" description="Phosphoserine" evidence="17">
    <location>
        <position position="145"/>
    </location>
</feature>
<feature type="modified residue" description="Phosphoserine" evidence="17">
    <location>
        <position position="148"/>
    </location>
</feature>
<feature type="modified residue" description="Phosphoserine" evidence="17 18">
    <location>
        <position position="184"/>
    </location>
</feature>
<feature type="modified residue" description="Phosphoserine" evidence="17">
    <location>
        <position position="194"/>
    </location>
</feature>
<feature type="modified residue" description="Phosphothreonine" evidence="14 17 19 21">
    <location>
        <position position="232"/>
    </location>
</feature>
<feature type="modified residue" description="Phosphoserine" evidence="21">
    <location>
        <position position="239"/>
    </location>
</feature>
<feature type="modified residue" description="Phosphoserine" evidence="19 21">
    <location>
        <position position="251"/>
    </location>
</feature>
<feature type="modified residue" description="Phosphoserine" evidence="21">
    <location>
        <position position="253"/>
    </location>
</feature>
<feature type="modified residue" description="Phosphoserine" evidence="17">
    <location>
        <position position="324"/>
    </location>
</feature>
<feature type="modified residue" description="Phosphoserine" evidence="19 21">
    <location>
        <position position="330"/>
    </location>
</feature>
<feature type="modified residue" description="Phosphoserine" evidence="17">
    <location>
        <position position="381"/>
    </location>
</feature>
<feature type="modified residue" description="Phosphoserine" evidence="19 20">
    <location>
        <position position="434"/>
    </location>
</feature>
<feature type="modified residue" description="Phosphoserine" evidence="19 20">
    <location>
        <position position="512"/>
    </location>
</feature>
<feature type="modified residue" description="Phosphoserine" evidence="21">
    <location>
        <position position="569"/>
    </location>
</feature>
<feature type="modified residue" description="Phosphothreonine" evidence="19">
    <location>
        <position position="610"/>
    </location>
</feature>
<feature type="cross-link" description="Glycyl lysine isopeptide (Lys-Gly) (interchain with G-Cter in SUMO2)" evidence="24">
    <location>
        <position position="217"/>
    </location>
</feature>
<feature type="cross-link" description="Glycyl lysine isopeptide (Lys-Gly) (interchain with G-Cter in SUMO2)" evidence="24">
    <location>
        <position position="220"/>
    </location>
</feature>
<feature type="cross-link" description="Glycyl lysine isopeptide (Lys-Gly) (interchain with G-Cter in SUMO2)" evidence="24">
    <location>
        <position position="257"/>
    </location>
</feature>
<feature type="cross-link" description="Glycyl lysine isopeptide (Lys-Gly) (interchain with G-Cter in SUMO2)" evidence="24">
    <location>
        <position position="316"/>
    </location>
</feature>
<feature type="cross-link" description="Glycyl lysine isopeptide (Lys-Gly) (interchain with G-Cter in SUMO2)" evidence="24">
    <location>
        <position position="321"/>
    </location>
</feature>
<feature type="cross-link" description="Glycyl lysine isopeptide (Lys-Gly) (interchain with G-Cter in SUMO2)" evidence="24">
    <location>
        <position position="345"/>
    </location>
</feature>
<feature type="cross-link" description="Glycyl lysine isopeptide (Lys-Gly) (interchain with G-Cter in SUMO2)" evidence="24">
    <location>
        <position position="384"/>
    </location>
</feature>
<feature type="cross-link" description="Glycyl lysine isopeptide (Lys-Gly) (interchain with G-Cter in SUMO2)" evidence="22 23 24">
    <location>
        <position position="558"/>
    </location>
</feature>
<feature type="cross-link" description="Glycyl lysine isopeptide (Lys-Gly) (interchain with G-Cter in SUMO2)" evidence="24">
    <location>
        <position position="584"/>
    </location>
</feature>
<feature type="cross-link" description="Glycyl lysine isopeptide (Lys-Gly) (interchain with G-Cter in SUMO2)" evidence="24">
    <location>
        <position position="606"/>
    </location>
</feature>
<feature type="cross-link" description="Glycyl lysine isopeptide (Lys-Gly) (interchain with G-Cter in SUMO2)" evidence="22 23 24">
    <location>
        <position position="626"/>
    </location>
</feature>
<feature type="cross-link" description="Glycyl lysine isopeptide (Lys-Gly) (interchain with G-Cter in SUMO2)" evidence="22 24">
    <location>
        <position position="649"/>
    </location>
</feature>
<feature type="cross-link" description="Glycyl lysine isopeptide (Lys-Gly) (interchain with G-Cter in SUMO2)" evidence="22 23 24">
    <location>
        <position position="658"/>
    </location>
</feature>
<feature type="cross-link" description="Glycyl lysine isopeptide (Lys-Gly) (interchain with G-Cter in SUMO2)" evidence="22 24">
    <location>
        <position position="686"/>
    </location>
</feature>
<feature type="cross-link" description="Glycyl lysine isopeptide (Lys-Gly) (interchain with G-Cter in SUMO2)" evidence="24">
    <location>
        <position position="731"/>
    </location>
</feature>
<feature type="sequence variant" id="VAR_038748" description="In dbSNP:rs3747965." evidence="3 5 7 8">
    <original>E</original>
    <variation>D</variation>
    <location>
        <position position="309"/>
    </location>
</feature>
<feature type="sequence variant" id="VAR_038749" description="In dbSNP:rs3179879.">
    <original>T</original>
    <variation>A</variation>
    <location>
        <position position="341"/>
    </location>
</feature>
<feature type="sequence variant" id="VAR_038750" description="In dbSNP:rs35650636.">
    <original>A</original>
    <variation>V</variation>
    <location>
        <position position="430"/>
    </location>
</feature>
<feature type="sequence variant" id="VAR_061710" description="In dbSNP:rs41292661.">
    <original>G</original>
    <variation>E</variation>
    <location>
        <position position="477"/>
    </location>
</feature>
<feature type="sequence variant" id="VAR_038751" description="In dbSNP:rs12748154.">
    <original>Y</original>
    <variation>F</variation>
    <location>
        <position position="676"/>
    </location>
</feature>
<feature type="sequence conflict" description="In Ref. 2; AAQ95169 and 3; AAA50601." evidence="9" ref="2 3">
    <original>A</original>
    <variation>D</variation>
    <location>
        <position position="47"/>
    </location>
</feature>
<feature type="sequence conflict" description="In Ref. 2; AAQ95169 and 3; AAA50601." evidence="9" ref="2 3">
    <original>R</original>
    <variation>S</variation>
    <location>
        <position position="67"/>
    </location>
</feature>
<feature type="sequence conflict" description="In Ref. 6; BAD96442." evidence="9" ref="6">
    <original>M</original>
    <variation>I</variation>
    <location>
        <position position="648"/>
    </location>
</feature>
<comment type="function">
    <text evidence="3 4 6">Regulates the transcriptional activity of DNTT and ESR1. May function as a chromatin remodeling protein (PubMed:12786946, PubMed:15047147). Part of the small subunit (SSU) processome, first precursor of the small eukaryotic ribosomal subunit. During the assembly of the SSU processome in the nucleolus, many ribosome biogenesis factors, an RNA chaperone and ribosomal proteins associate with the nascent pre-rRNA and work in concert to generate RNA folding, modifications, rearrangements and cleavage as well as targeted degradation of pre-ribosomal RNA by the RNA exosome (PubMed:34516797).</text>
</comment>
<comment type="subunit">
    <text evidence="3 4 6">Forms a ternary complex with DNTT and core histone; interaction with PCNA releases DNTT and H2A/H2B histones from this ternary complex. Interacts with ESR1, ESR2, PPARG and RXRA (PubMed:12786946, PubMed:15047147). Part of the small subunit (SSU) processome, composed of more than 70 proteins and the RNA chaperone small nucleolar RNA (snoRNA) U3 (PubMed:34516797).</text>
</comment>
<comment type="interaction">
    <interactant intactId="EBI-5666736">
        <id>Q5QJE6</id>
    </interactant>
    <interactant intactId="EBI-2559016">
        <id>Q6NZI2</id>
        <label>CAVIN1</label>
    </interactant>
    <organismsDiffer>false</organismsDiffer>
    <experiments>3</experiments>
</comment>
<comment type="interaction">
    <interactant intactId="EBI-5666736">
        <id>Q5QJE6</id>
    </interactant>
    <interactant intactId="EBI-739624">
        <id>Q8NHQ1</id>
        <label>CEP70</label>
    </interactant>
    <organismsDiffer>false</organismsDiffer>
    <experiments>3</experiments>
</comment>
<comment type="interaction">
    <interactant intactId="EBI-5666736">
        <id>Q5QJE6</id>
    </interactant>
    <interactant intactId="EBI-79165">
        <id>Q9NRD5</id>
        <label>PICK1</label>
    </interactant>
    <organismsDiffer>false</organismsDiffer>
    <experiments>3</experiments>
</comment>
<comment type="interaction">
    <interactant intactId="EBI-5666736">
        <id>Q5QJE6</id>
    </interactant>
    <interactant intactId="EBI-373337">
        <id>O76064</id>
        <label>RNF8</label>
    </interactant>
    <organismsDiffer>false</organismsDiffer>
    <experiments>3</experiments>
</comment>
<comment type="subcellular location">
    <subcellularLocation>
        <location evidence="3 4">Nucleus</location>
    </subcellularLocation>
    <subcellularLocation>
        <location evidence="6">Nucleus</location>
        <location evidence="6">Nucleolus</location>
    </subcellularLocation>
</comment>
<comment type="tissue specificity">
    <text evidence="3 4">Widely expressed with higher levels in testis.</text>
</comment>
<comment type="sequence caution" evidence="9">
    <conflict type="frameshift">
        <sequence resource="EMBL-CDS" id="AAA50601"/>
    </conflict>
</comment>
<comment type="sequence caution" evidence="9">
    <conflict type="miscellaneous discrepancy">
        <sequence resource="EMBL-CDS" id="AAH47688"/>
    </conflict>
    <text>Contaminating sequence. Potential poly-A sequence.</text>
</comment>
<protein>
    <recommendedName>
        <fullName>Deoxynucleotidyltransferase terminal-interacting protein 2</fullName>
    </recommendedName>
    <alternativeName>
        <fullName>Estrogen receptor-binding protein</fullName>
    </alternativeName>
    <alternativeName>
        <fullName>LPTS-interacting protein 2</fullName>
        <shortName>LPTS-RP2</shortName>
    </alternativeName>
    <alternativeName>
        <fullName>Terminal deoxynucleotidyltransferase-interacting factor 2</fullName>
        <shortName>TdIF2</shortName>
        <shortName>TdT-interacting factor 2</shortName>
    </alternativeName>
</protein>
<dbReference type="EMBL" id="AB046574">
    <property type="protein sequence ID" value="BAD08331.1"/>
    <property type="molecule type" value="mRNA"/>
</dbReference>
<dbReference type="EMBL" id="AY394925">
    <property type="protein sequence ID" value="AAQ95169.1"/>
    <property type="molecule type" value="mRNA"/>
</dbReference>
<dbReference type="EMBL" id="U15552">
    <property type="protein sequence ID" value="AAA50601.1"/>
    <property type="status" value="ALT_FRAME"/>
    <property type="molecule type" value="mRNA"/>
</dbReference>
<dbReference type="EMBL" id="AY336729">
    <property type="protein sequence ID" value="AAR02407.1"/>
    <property type="molecule type" value="mRNA"/>
</dbReference>
<dbReference type="EMBL" id="AK292379">
    <property type="protein sequence ID" value="BAF85068.1"/>
    <property type="molecule type" value="mRNA"/>
</dbReference>
<dbReference type="EMBL" id="AK222722">
    <property type="protein sequence ID" value="BAD96442.1"/>
    <property type="molecule type" value="mRNA"/>
</dbReference>
<dbReference type="EMBL" id="AL049796">
    <property type="status" value="NOT_ANNOTATED_CDS"/>
    <property type="molecule type" value="Genomic_DNA"/>
</dbReference>
<dbReference type="EMBL" id="CH471097">
    <property type="protein sequence ID" value="EAW73064.1"/>
    <property type="molecule type" value="Genomic_DNA"/>
</dbReference>
<dbReference type="EMBL" id="BC047688">
    <property type="protein sequence ID" value="AAH47688.1"/>
    <property type="status" value="ALT_SEQ"/>
    <property type="molecule type" value="mRNA"/>
</dbReference>
<dbReference type="EMBL" id="BC130622">
    <property type="protein sequence ID" value="AAI30623.1"/>
    <property type="molecule type" value="mRNA"/>
</dbReference>
<dbReference type="CCDS" id="CCDS44174.1"/>
<dbReference type="PIR" id="G01522">
    <property type="entry name" value="G01522"/>
</dbReference>
<dbReference type="RefSeq" id="NP_055412.2">
    <property type="nucleotide sequence ID" value="NM_014597.5"/>
</dbReference>
<dbReference type="PDB" id="7MQ8">
    <property type="method" value="EM"/>
    <property type="resolution" value="3.60 A"/>
    <property type="chains" value="SQ=1-756"/>
</dbReference>
<dbReference type="PDB" id="7MQ9">
    <property type="method" value="EM"/>
    <property type="resolution" value="3.87 A"/>
    <property type="chains" value="SQ=1-756"/>
</dbReference>
<dbReference type="PDB" id="7MQA">
    <property type="method" value="EM"/>
    <property type="resolution" value="2.70 A"/>
    <property type="chains" value="SQ=1-756"/>
</dbReference>
<dbReference type="PDBsum" id="7MQ8"/>
<dbReference type="PDBsum" id="7MQ9"/>
<dbReference type="PDBsum" id="7MQA"/>
<dbReference type="EMDB" id="EMD-23936"/>
<dbReference type="EMDB" id="EMD-23937"/>
<dbReference type="EMDB" id="EMD-23938"/>
<dbReference type="SMR" id="Q5QJE6"/>
<dbReference type="BioGRID" id="119052">
    <property type="interactions" value="155"/>
</dbReference>
<dbReference type="ComplexPortal" id="CPX-2511">
    <property type="entry name" value="Small ribosomal subunit processome"/>
</dbReference>
<dbReference type="CORUM" id="Q5QJE6"/>
<dbReference type="FunCoup" id="Q5QJE6">
    <property type="interactions" value="2367"/>
</dbReference>
<dbReference type="IntAct" id="Q5QJE6">
    <property type="interactions" value="77"/>
</dbReference>
<dbReference type="MINT" id="Q5QJE6"/>
<dbReference type="STRING" id="9606.ENSP00000411010"/>
<dbReference type="GlyCosmos" id="Q5QJE6">
    <property type="glycosylation" value="1 site, 1 glycan"/>
</dbReference>
<dbReference type="GlyGen" id="Q5QJE6">
    <property type="glycosylation" value="1 site, 1 O-linked glycan (1 site)"/>
</dbReference>
<dbReference type="iPTMnet" id="Q5QJE6"/>
<dbReference type="PhosphoSitePlus" id="Q5QJE6"/>
<dbReference type="SwissPalm" id="Q5QJE6"/>
<dbReference type="BioMuta" id="DNTTIP2"/>
<dbReference type="DMDM" id="166987398"/>
<dbReference type="jPOST" id="Q5QJE6"/>
<dbReference type="MassIVE" id="Q5QJE6"/>
<dbReference type="PaxDb" id="9606-ENSP00000411010"/>
<dbReference type="PeptideAtlas" id="Q5QJE6"/>
<dbReference type="ProteomicsDB" id="63620"/>
<dbReference type="Pumba" id="Q5QJE6"/>
<dbReference type="Antibodypedia" id="48013">
    <property type="antibodies" value="22 antibodies from 9 providers"/>
</dbReference>
<dbReference type="DNASU" id="30836"/>
<dbReference type="Ensembl" id="ENST00000436063.7">
    <property type="protein sequence ID" value="ENSP00000411010.2"/>
    <property type="gene ID" value="ENSG00000067334.14"/>
</dbReference>
<dbReference type="GeneID" id="30836"/>
<dbReference type="KEGG" id="hsa:30836"/>
<dbReference type="MANE-Select" id="ENST00000436063.7">
    <property type="protein sequence ID" value="ENSP00000411010.2"/>
    <property type="RefSeq nucleotide sequence ID" value="NM_014597.5"/>
    <property type="RefSeq protein sequence ID" value="NP_055412.2"/>
</dbReference>
<dbReference type="UCSC" id="uc001dqf.4">
    <property type="organism name" value="human"/>
</dbReference>
<dbReference type="AGR" id="HGNC:24013"/>
<dbReference type="CTD" id="30836"/>
<dbReference type="DisGeNET" id="30836"/>
<dbReference type="GeneCards" id="DNTTIP2"/>
<dbReference type="HGNC" id="HGNC:24013">
    <property type="gene designation" value="DNTTIP2"/>
</dbReference>
<dbReference type="HPA" id="ENSG00000067334">
    <property type="expression patterns" value="Low tissue specificity"/>
</dbReference>
<dbReference type="MIM" id="611199">
    <property type="type" value="gene"/>
</dbReference>
<dbReference type="neXtProt" id="NX_Q5QJE6"/>
<dbReference type="OpenTargets" id="ENSG00000067334"/>
<dbReference type="PharmGKB" id="PA142671963"/>
<dbReference type="VEuPathDB" id="HostDB:ENSG00000067334"/>
<dbReference type="eggNOG" id="KOG3100">
    <property type="taxonomic scope" value="Eukaryota"/>
</dbReference>
<dbReference type="GeneTree" id="ENSGT00510000048142"/>
<dbReference type="HOGENOM" id="CLU_018725_0_0_1"/>
<dbReference type="InParanoid" id="Q5QJE6"/>
<dbReference type="OMA" id="SENMSCD"/>
<dbReference type="OrthoDB" id="427886at2759"/>
<dbReference type="PAN-GO" id="Q5QJE6">
    <property type="GO annotations" value="2 GO annotations based on evolutionary models"/>
</dbReference>
<dbReference type="PhylomeDB" id="Q5QJE6"/>
<dbReference type="TreeFam" id="TF105964"/>
<dbReference type="PathwayCommons" id="Q5QJE6"/>
<dbReference type="SignaLink" id="Q5QJE6"/>
<dbReference type="BioGRID-ORCS" id="30836">
    <property type="hits" value="510 hits in 1182 CRISPR screens"/>
</dbReference>
<dbReference type="CD-CODE" id="91857CE7">
    <property type="entry name" value="Nucleolus"/>
</dbReference>
<dbReference type="ChiTaRS" id="DNTTIP2">
    <property type="organism name" value="human"/>
</dbReference>
<dbReference type="GeneWiki" id="DNTTIP2"/>
<dbReference type="GenomeRNAi" id="30836"/>
<dbReference type="Pharos" id="Q5QJE6">
    <property type="development level" value="Tdark"/>
</dbReference>
<dbReference type="PRO" id="PR:Q5QJE6"/>
<dbReference type="Proteomes" id="UP000005640">
    <property type="component" value="Chromosome 1"/>
</dbReference>
<dbReference type="RNAct" id="Q5QJE6">
    <property type="molecule type" value="protein"/>
</dbReference>
<dbReference type="Bgee" id="ENSG00000067334">
    <property type="expression patterns" value="Expressed in calcaneal tendon and 201 other cell types or tissues"/>
</dbReference>
<dbReference type="ExpressionAtlas" id="Q5QJE6">
    <property type="expression patterns" value="baseline and differential"/>
</dbReference>
<dbReference type="GO" id="GO:0005694">
    <property type="term" value="C:chromosome"/>
    <property type="evidence" value="ECO:0000314"/>
    <property type="project" value="HPA"/>
</dbReference>
<dbReference type="GO" id="GO:0005730">
    <property type="term" value="C:nucleolus"/>
    <property type="evidence" value="ECO:0000314"/>
    <property type="project" value="HPA"/>
</dbReference>
<dbReference type="GO" id="GO:0005654">
    <property type="term" value="C:nucleoplasm"/>
    <property type="evidence" value="ECO:0000314"/>
    <property type="project" value="HPA"/>
</dbReference>
<dbReference type="GO" id="GO:0032040">
    <property type="term" value="C:small-subunit processome"/>
    <property type="evidence" value="ECO:0000314"/>
    <property type="project" value="UniProtKB"/>
</dbReference>
<dbReference type="GO" id="GO:0003723">
    <property type="term" value="F:RNA binding"/>
    <property type="evidence" value="ECO:0007005"/>
    <property type="project" value="UniProtKB"/>
</dbReference>
<dbReference type="GO" id="GO:0042274">
    <property type="term" value="P:ribosomal small subunit biogenesis"/>
    <property type="evidence" value="ECO:0000314"/>
    <property type="project" value="UniProtKB"/>
</dbReference>
<dbReference type="GO" id="GO:0006396">
    <property type="term" value="P:RNA processing"/>
    <property type="evidence" value="ECO:0000318"/>
    <property type="project" value="GO_Central"/>
</dbReference>
<dbReference type="InterPro" id="IPR039883">
    <property type="entry name" value="Fcf2/DNTTIP2"/>
</dbReference>
<dbReference type="InterPro" id="IPR014810">
    <property type="entry name" value="Fcf2_C"/>
</dbReference>
<dbReference type="PANTHER" id="PTHR21686">
    <property type="entry name" value="DEOXYNUCLEOTIDYLTRANSFERASE TERMINAL-INTERACTING PROTEIN 2"/>
    <property type="match status" value="1"/>
</dbReference>
<dbReference type="PANTHER" id="PTHR21686:SF12">
    <property type="entry name" value="DEOXYNUCLEOTIDYLTRANSFERASE TERMINAL-INTERACTING PROTEIN 2"/>
    <property type="match status" value="1"/>
</dbReference>
<dbReference type="Pfam" id="PF08698">
    <property type="entry name" value="Fcf2"/>
    <property type="match status" value="1"/>
</dbReference>
<organism>
    <name type="scientific">Homo sapiens</name>
    <name type="common">Human</name>
    <dbReference type="NCBI Taxonomy" id="9606"/>
    <lineage>
        <taxon>Eukaryota</taxon>
        <taxon>Metazoa</taxon>
        <taxon>Chordata</taxon>
        <taxon>Craniata</taxon>
        <taxon>Vertebrata</taxon>
        <taxon>Euteleostomi</taxon>
        <taxon>Mammalia</taxon>
        <taxon>Eutheria</taxon>
        <taxon>Euarchontoglires</taxon>
        <taxon>Primates</taxon>
        <taxon>Haplorrhini</taxon>
        <taxon>Catarrhini</taxon>
        <taxon>Hominidae</taxon>
        <taxon>Homo</taxon>
    </lineage>
</organism>
<keyword id="KW-0002">3D-structure</keyword>
<keyword id="KW-0175">Coiled coil</keyword>
<keyword id="KW-1017">Isopeptide bond</keyword>
<keyword id="KW-0539">Nucleus</keyword>
<keyword id="KW-0597">Phosphoprotein</keyword>
<keyword id="KW-1267">Proteomics identification</keyword>
<keyword id="KW-1185">Reference proteome</keyword>
<keyword id="KW-0804">Transcription</keyword>
<keyword id="KW-0805">Transcription regulation</keyword>
<keyword id="KW-0832">Ubl conjugation</keyword>
<sequence>MVVTRSARAKASIQAASAESSGQKSFAANGIQAHPESSTGSDARTTAESQTTGKQSLIPRTPKARKRKSRTTGSLPKGTEPSTDGETSEAESNYSVSEHHDTILRVTRRRQILIACSPVSSVRKKPKVTPTKESYTEEIVSEAESHVSGISRIVLPTEKTTGARRSKAKSLTDPSQESHTEAISDAETSSSDISFSGIATRRTRSMQRKLKAQTEKKDSKIVPGNEKQIVGTPVNSEDSDTRQTSHLQARSLSEINKPNFYNNDFDDDFSHRSSENILTVHEQANVESLKETKQNCKDLDEDANGITDEGKEINEKSSQLKNLSELQDTSLQQLVSQRHSTPQNKNAVSVHSNLNSEAVMKSLTQTFATVEVGRWNNNKKSPIKASDLTKFGDCGGSDDEEESTVISVSEDMNSEGNVDFECDTKLYTSAPNTSQGKDNSVLLVLSSDESQQSENSENEEDTLCFVENSGQRESLSGDTGSLSCDNALFVIDTTPGMSADKNFYLEEEDKASEVAIEEEKEEEEDEKSEEDSSDHDENEDEFSDEEDFLNSTKAKLLKLTSSSIDPGLSIKQLGGLYINFNADKLQSNKRTLTQIKEKKKNELLQKAVITPDFEKNHCVPPYSESKYQLQKKRRKERQKTAGDGWFGMKAPEMTNELKNDLKALKMRASMDPKRFYKKNDRDGFPKYFQIGTIVDNPADFYHSRIPKKQRKRTIVEELLADSEFRRYNRRKYSEIMAEKAANAAGKKFRKKKKFRN</sequence>
<proteinExistence type="evidence at protein level"/>
<evidence type="ECO:0000255" key="1"/>
<evidence type="ECO:0000256" key="2">
    <source>
        <dbReference type="SAM" id="MobiDB-lite"/>
    </source>
</evidence>
<evidence type="ECO:0000269" key="3">
    <source>
    </source>
</evidence>
<evidence type="ECO:0000269" key="4">
    <source>
    </source>
</evidence>
<evidence type="ECO:0000269" key="5">
    <source>
    </source>
</evidence>
<evidence type="ECO:0000269" key="6">
    <source>
    </source>
</evidence>
<evidence type="ECO:0000269" key="7">
    <source ref="4"/>
</evidence>
<evidence type="ECO:0000269" key="8">
    <source ref="8"/>
</evidence>
<evidence type="ECO:0000305" key="9"/>
<evidence type="ECO:0000312" key="10">
    <source>
        <dbReference type="HGNC" id="HGNC:24013"/>
    </source>
</evidence>
<evidence type="ECO:0007744" key="11">
    <source>
        <dbReference type="PDB" id="7MQ8"/>
    </source>
</evidence>
<evidence type="ECO:0007744" key="12">
    <source>
        <dbReference type="PDB" id="7MQ9"/>
    </source>
</evidence>
<evidence type="ECO:0007744" key="13">
    <source>
        <dbReference type="PDB" id="7MQA"/>
    </source>
</evidence>
<evidence type="ECO:0007744" key="14">
    <source>
    </source>
</evidence>
<evidence type="ECO:0007744" key="15">
    <source>
    </source>
</evidence>
<evidence type="ECO:0007744" key="16">
    <source>
    </source>
</evidence>
<evidence type="ECO:0007744" key="17">
    <source>
    </source>
</evidence>
<evidence type="ECO:0007744" key="18">
    <source>
    </source>
</evidence>
<evidence type="ECO:0007744" key="19">
    <source>
    </source>
</evidence>
<evidence type="ECO:0007744" key="20">
    <source>
    </source>
</evidence>
<evidence type="ECO:0007744" key="21">
    <source>
    </source>
</evidence>
<evidence type="ECO:0007744" key="22">
    <source>
    </source>
</evidence>
<evidence type="ECO:0007744" key="23">
    <source>
    </source>
</evidence>
<evidence type="ECO:0007744" key="24">
    <source>
    </source>
</evidence>
<accession>Q5QJE6</accession>
<accession>Q12987</accession>
<accession>Q53H59</accession>
<accession>Q5TFJ4</accession>
<accession>Q6TLI0</accession>
<accession>Q76MJ8</accession>
<accession>Q86WX9</accession>
<name>TDIF2_HUMAN</name>
<gene>
    <name evidence="10" type="primary">DNTTIP2</name>
    <name type="synonym">ERBP</name>
    <name type="synonym">TDIF2</name>
</gene>
<reference key="1">
    <citation type="journal article" date="2003" name="Genes Cells">
        <title>Terminal deoxynucleotidyltransferase forms a ternary complex with a novel chromatin remodeling protein with 82 kDa and core histone.</title>
        <authorList>
            <person name="Fujita K."/>
            <person name="Shimazaki N."/>
            <person name="Ohta Y."/>
            <person name="Kubota T."/>
            <person name="Ibe S."/>
            <person name="Toji S."/>
            <person name="Tamai K."/>
            <person name="Fujisaki S."/>
            <person name="Hayano T."/>
            <person name="Koiwai O."/>
        </authorList>
    </citation>
    <scope>NUCLEOTIDE SEQUENCE [MRNA]</scope>
    <scope>VARIANT ASP-309</scope>
    <scope>FUNCTION</scope>
    <scope>IDENTIFICATION IN A COMPLEX WITH DNTT; PCNA AND CORE HISTONE</scope>
    <scope>SUBCELLULAR LOCATION</scope>
    <scope>TISSUE SPECIFICITY</scope>
    <source>
        <tissue>Thymus</tissue>
    </source>
</reference>
<reference key="2">
    <citation type="journal article" date="2004" name="Biochem. Biophys. Res. Commun.">
        <title>ERBP, a novel estrogen receptor binding protein enhancing the activity of estrogen receptor.</title>
        <authorList>
            <person name="Bu H."/>
            <person name="Kashireddy P."/>
            <person name="Chang J."/>
            <person name="Zhu Y.T."/>
            <person name="Zhang Z."/>
            <person name="Zheng W."/>
            <person name="Rao S.M."/>
            <person name="Zhu Y.-J."/>
        </authorList>
    </citation>
    <scope>NUCLEOTIDE SEQUENCE [MRNA]</scope>
    <scope>FUNCTION</scope>
    <scope>INTERACTION WITH ESR1; ESR2; PPARG AND RXRA</scope>
    <scope>SUBCELLULAR LOCATION</scope>
    <scope>TISSUE SPECIFICITY</scope>
</reference>
<reference key="3">
    <citation type="submission" date="1994-10" db="EMBL/GenBank/DDBJ databases">
        <title>cDNA encoding an acidic 82 kDa protein.</title>
        <authorList>
            <person name="Carlsson P."/>
        </authorList>
    </citation>
    <scope>NUCLEOTIDE SEQUENCE [MRNA]</scope>
    <source>
        <tissue>Liver</tissue>
    </source>
</reference>
<reference key="4">
    <citation type="submission" date="2003-07" db="EMBL/GenBank/DDBJ databases">
        <title>LPTS-RP2, one LPTS-interacting protein.</title>
        <authorList>
            <person name="Song H."/>
            <person name="Zhao M."/>
            <person name="Li T."/>
        </authorList>
    </citation>
    <scope>NUCLEOTIDE SEQUENCE [MRNA]</scope>
    <scope>VARIANT ASP-309</scope>
    <source>
        <tissue>Liver</tissue>
    </source>
</reference>
<reference key="5">
    <citation type="journal article" date="2004" name="Nat. Genet.">
        <title>Complete sequencing and characterization of 21,243 full-length human cDNAs.</title>
        <authorList>
            <person name="Ota T."/>
            <person name="Suzuki Y."/>
            <person name="Nishikawa T."/>
            <person name="Otsuki T."/>
            <person name="Sugiyama T."/>
            <person name="Irie R."/>
            <person name="Wakamatsu A."/>
            <person name="Hayashi K."/>
            <person name="Sato H."/>
            <person name="Nagai K."/>
            <person name="Kimura K."/>
            <person name="Makita H."/>
            <person name="Sekine M."/>
            <person name="Obayashi M."/>
            <person name="Nishi T."/>
            <person name="Shibahara T."/>
            <person name="Tanaka T."/>
            <person name="Ishii S."/>
            <person name="Yamamoto J."/>
            <person name="Saito K."/>
            <person name="Kawai Y."/>
            <person name="Isono Y."/>
            <person name="Nakamura Y."/>
            <person name="Nagahari K."/>
            <person name="Murakami K."/>
            <person name="Yasuda T."/>
            <person name="Iwayanagi T."/>
            <person name="Wagatsuma M."/>
            <person name="Shiratori A."/>
            <person name="Sudo H."/>
            <person name="Hosoiri T."/>
            <person name="Kaku Y."/>
            <person name="Kodaira H."/>
            <person name="Kondo H."/>
            <person name="Sugawara M."/>
            <person name="Takahashi M."/>
            <person name="Kanda K."/>
            <person name="Yokoi T."/>
            <person name="Furuya T."/>
            <person name="Kikkawa E."/>
            <person name="Omura Y."/>
            <person name="Abe K."/>
            <person name="Kamihara K."/>
            <person name="Katsuta N."/>
            <person name="Sato K."/>
            <person name="Tanikawa M."/>
            <person name="Yamazaki M."/>
            <person name="Ninomiya K."/>
            <person name="Ishibashi T."/>
            <person name="Yamashita H."/>
            <person name="Murakawa K."/>
            <person name="Fujimori K."/>
            <person name="Tanai H."/>
            <person name="Kimata M."/>
            <person name="Watanabe M."/>
            <person name="Hiraoka S."/>
            <person name="Chiba Y."/>
            <person name="Ishida S."/>
            <person name="Ono Y."/>
            <person name="Takiguchi S."/>
            <person name="Watanabe S."/>
            <person name="Yosida M."/>
            <person name="Hotuta T."/>
            <person name="Kusano J."/>
            <person name="Kanehori K."/>
            <person name="Takahashi-Fujii A."/>
            <person name="Hara H."/>
            <person name="Tanase T.-O."/>
            <person name="Nomura Y."/>
            <person name="Togiya S."/>
            <person name="Komai F."/>
            <person name="Hara R."/>
            <person name="Takeuchi K."/>
            <person name="Arita M."/>
            <person name="Imose N."/>
            <person name="Musashino K."/>
            <person name="Yuuki H."/>
            <person name="Oshima A."/>
            <person name="Sasaki N."/>
            <person name="Aotsuka S."/>
            <person name="Yoshikawa Y."/>
            <person name="Matsunawa H."/>
            <person name="Ichihara T."/>
            <person name="Shiohata N."/>
            <person name="Sano S."/>
            <person name="Moriya S."/>
            <person name="Momiyama H."/>
            <person name="Satoh N."/>
            <person name="Takami S."/>
            <person name="Terashima Y."/>
            <person name="Suzuki O."/>
            <person name="Nakagawa S."/>
            <person name="Senoh A."/>
            <person name="Mizoguchi H."/>
            <person name="Goto Y."/>
            <person name="Shimizu F."/>
            <person name="Wakebe H."/>
            <person name="Hishigaki H."/>
            <person name="Watanabe T."/>
            <person name="Sugiyama A."/>
            <person name="Takemoto M."/>
            <person name="Kawakami B."/>
            <person name="Yamazaki M."/>
            <person name="Watanabe K."/>
            <person name="Kumagai A."/>
            <person name="Itakura S."/>
            <person name="Fukuzumi Y."/>
            <person name="Fujimori Y."/>
            <person name="Komiyama M."/>
            <person name="Tashiro H."/>
            <person name="Tanigami A."/>
            <person name="Fujiwara T."/>
            <person name="Ono T."/>
            <person name="Yamada K."/>
            <person name="Fujii Y."/>
            <person name="Ozaki K."/>
            <person name="Hirao M."/>
            <person name="Ohmori Y."/>
            <person name="Kawabata A."/>
            <person name="Hikiji T."/>
            <person name="Kobatake N."/>
            <person name="Inagaki H."/>
            <person name="Ikema Y."/>
            <person name="Okamoto S."/>
            <person name="Okitani R."/>
            <person name="Kawakami T."/>
            <person name="Noguchi S."/>
            <person name="Itoh T."/>
            <person name="Shigeta K."/>
            <person name="Senba T."/>
            <person name="Matsumura K."/>
            <person name="Nakajima Y."/>
            <person name="Mizuno T."/>
            <person name="Morinaga M."/>
            <person name="Sasaki M."/>
            <person name="Togashi T."/>
            <person name="Oyama M."/>
            <person name="Hata H."/>
            <person name="Watanabe M."/>
            <person name="Komatsu T."/>
            <person name="Mizushima-Sugano J."/>
            <person name="Satoh T."/>
            <person name="Shirai Y."/>
            <person name="Takahashi Y."/>
            <person name="Nakagawa K."/>
            <person name="Okumura K."/>
            <person name="Nagase T."/>
            <person name="Nomura N."/>
            <person name="Kikuchi H."/>
            <person name="Masuho Y."/>
            <person name="Yamashita R."/>
            <person name="Nakai K."/>
            <person name="Yada T."/>
            <person name="Nakamura Y."/>
            <person name="Ohara O."/>
            <person name="Isogai T."/>
            <person name="Sugano S."/>
        </authorList>
    </citation>
    <scope>NUCLEOTIDE SEQUENCE [LARGE SCALE MRNA]</scope>
    <source>
        <tissue>Testis</tissue>
    </source>
</reference>
<reference key="6">
    <citation type="submission" date="2005-04" db="EMBL/GenBank/DDBJ databases">
        <authorList>
            <person name="Suzuki Y."/>
            <person name="Sugano S."/>
            <person name="Totoki Y."/>
            <person name="Toyoda A."/>
            <person name="Takeda T."/>
            <person name="Sakaki Y."/>
            <person name="Tanaka A."/>
            <person name="Yokoyama S."/>
        </authorList>
    </citation>
    <scope>NUCLEOTIDE SEQUENCE [LARGE SCALE MRNA]</scope>
    <source>
        <tissue>Colon</tissue>
    </source>
</reference>
<reference key="7">
    <citation type="journal article" date="2006" name="Nature">
        <title>The DNA sequence and biological annotation of human chromosome 1.</title>
        <authorList>
            <person name="Gregory S.G."/>
            <person name="Barlow K.F."/>
            <person name="McLay K.E."/>
            <person name="Kaul R."/>
            <person name="Swarbreck D."/>
            <person name="Dunham A."/>
            <person name="Scott C.E."/>
            <person name="Howe K.L."/>
            <person name="Woodfine K."/>
            <person name="Spencer C.C.A."/>
            <person name="Jones M.C."/>
            <person name="Gillson C."/>
            <person name="Searle S."/>
            <person name="Zhou Y."/>
            <person name="Kokocinski F."/>
            <person name="McDonald L."/>
            <person name="Evans R."/>
            <person name="Phillips K."/>
            <person name="Atkinson A."/>
            <person name="Cooper R."/>
            <person name="Jones C."/>
            <person name="Hall R.E."/>
            <person name="Andrews T.D."/>
            <person name="Lloyd C."/>
            <person name="Ainscough R."/>
            <person name="Almeida J.P."/>
            <person name="Ambrose K.D."/>
            <person name="Anderson F."/>
            <person name="Andrew R.W."/>
            <person name="Ashwell R.I.S."/>
            <person name="Aubin K."/>
            <person name="Babbage A.K."/>
            <person name="Bagguley C.L."/>
            <person name="Bailey J."/>
            <person name="Beasley H."/>
            <person name="Bethel G."/>
            <person name="Bird C.P."/>
            <person name="Bray-Allen S."/>
            <person name="Brown J.Y."/>
            <person name="Brown A.J."/>
            <person name="Buckley D."/>
            <person name="Burton J."/>
            <person name="Bye J."/>
            <person name="Carder C."/>
            <person name="Chapman J.C."/>
            <person name="Clark S.Y."/>
            <person name="Clarke G."/>
            <person name="Clee C."/>
            <person name="Cobley V."/>
            <person name="Collier R.E."/>
            <person name="Corby N."/>
            <person name="Coville G.J."/>
            <person name="Davies J."/>
            <person name="Deadman R."/>
            <person name="Dunn M."/>
            <person name="Earthrowl M."/>
            <person name="Ellington A.G."/>
            <person name="Errington H."/>
            <person name="Frankish A."/>
            <person name="Frankland J."/>
            <person name="French L."/>
            <person name="Garner P."/>
            <person name="Garnett J."/>
            <person name="Gay L."/>
            <person name="Ghori M.R.J."/>
            <person name="Gibson R."/>
            <person name="Gilby L.M."/>
            <person name="Gillett W."/>
            <person name="Glithero R.J."/>
            <person name="Grafham D.V."/>
            <person name="Griffiths C."/>
            <person name="Griffiths-Jones S."/>
            <person name="Grocock R."/>
            <person name="Hammond S."/>
            <person name="Harrison E.S.I."/>
            <person name="Hart E."/>
            <person name="Haugen E."/>
            <person name="Heath P.D."/>
            <person name="Holmes S."/>
            <person name="Holt K."/>
            <person name="Howden P.J."/>
            <person name="Hunt A.R."/>
            <person name="Hunt S.E."/>
            <person name="Hunter G."/>
            <person name="Isherwood J."/>
            <person name="James R."/>
            <person name="Johnson C."/>
            <person name="Johnson D."/>
            <person name="Joy A."/>
            <person name="Kay M."/>
            <person name="Kershaw J.K."/>
            <person name="Kibukawa M."/>
            <person name="Kimberley A.M."/>
            <person name="King A."/>
            <person name="Knights A.J."/>
            <person name="Lad H."/>
            <person name="Laird G."/>
            <person name="Lawlor S."/>
            <person name="Leongamornlert D.A."/>
            <person name="Lloyd D.M."/>
            <person name="Loveland J."/>
            <person name="Lovell J."/>
            <person name="Lush M.J."/>
            <person name="Lyne R."/>
            <person name="Martin S."/>
            <person name="Mashreghi-Mohammadi M."/>
            <person name="Matthews L."/>
            <person name="Matthews N.S.W."/>
            <person name="McLaren S."/>
            <person name="Milne S."/>
            <person name="Mistry S."/>
            <person name="Moore M.J.F."/>
            <person name="Nickerson T."/>
            <person name="O'Dell C.N."/>
            <person name="Oliver K."/>
            <person name="Palmeiri A."/>
            <person name="Palmer S.A."/>
            <person name="Parker A."/>
            <person name="Patel D."/>
            <person name="Pearce A.V."/>
            <person name="Peck A.I."/>
            <person name="Pelan S."/>
            <person name="Phelps K."/>
            <person name="Phillimore B.J."/>
            <person name="Plumb R."/>
            <person name="Rajan J."/>
            <person name="Raymond C."/>
            <person name="Rouse G."/>
            <person name="Saenphimmachak C."/>
            <person name="Sehra H.K."/>
            <person name="Sheridan E."/>
            <person name="Shownkeen R."/>
            <person name="Sims S."/>
            <person name="Skuce C.D."/>
            <person name="Smith M."/>
            <person name="Steward C."/>
            <person name="Subramanian S."/>
            <person name="Sycamore N."/>
            <person name="Tracey A."/>
            <person name="Tromans A."/>
            <person name="Van Helmond Z."/>
            <person name="Wall M."/>
            <person name="Wallis J.M."/>
            <person name="White S."/>
            <person name="Whitehead S.L."/>
            <person name="Wilkinson J.E."/>
            <person name="Willey D.L."/>
            <person name="Williams H."/>
            <person name="Wilming L."/>
            <person name="Wray P.W."/>
            <person name="Wu Z."/>
            <person name="Coulson A."/>
            <person name="Vaudin M."/>
            <person name="Sulston J.E."/>
            <person name="Durbin R.M."/>
            <person name="Hubbard T."/>
            <person name="Wooster R."/>
            <person name="Dunham I."/>
            <person name="Carter N.P."/>
            <person name="McVean G."/>
            <person name="Ross M.T."/>
            <person name="Harrow J."/>
            <person name="Olson M.V."/>
            <person name="Beck S."/>
            <person name="Rogers J."/>
            <person name="Bentley D.R."/>
        </authorList>
    </citation>
    <scope>NUCLEOTIDE SEQUENCE [LARGE SCALE GENOMIC DNA]</scope>
</reference>
<reference key="8">
    <citation type="submission" date="2005-09" db="EMBL/GenBank/DDBJ databases">
        <authorList>
            <person name="Mural R.J."/>
            <person name="Istrail S."/>
            <person name="Sutton G.G."/>
            <person name="Florea L."/>
            <person name="Halpern A.L."/>
            <person name="Mobarry C.M."/>
            <person name="Lippert R."/>
            <person name="Walenz B."/>
            <person name="Shatkay H."/>
            <person name="Dew I."/>
            <person name="Miller J.R."/>
            <person name="Flanigan M.J."/>
            <person name="Edwards N.J."/>
            <person name="Bolanos R."/>
            <person name="Fasulo D."/>
            <person name="Halldorsson B.V."/>
            <person name="Hannenhalli S."/>
            <person name="Turner R."/>
            <person name="Yooseph S."/>
            <person name="Lu F."/>
            <person name="Nusskern D.R."/>
            <person name="Shue B.C."/>
            <person name="Zheng X.H."/>
            <person name="Zhong F."/>
            <person name="Delcher A.L."/>
            <person name="Huson D.H."/>
            <person name="Kravitz S.A."/>
            <person name="Mouchard L."/>
            <person name="Reinert K."/>
            <person name="Remington K.A."/>
            <person name="Clark A.G."/>
            <person name="Waterman M.S."/>
            <person name="Eichler E.E."/>
            <person name="Adams M.D."/>
            <person name="Hunkapiller M.W."/>
            <person name="Myers E.W."/>
            <person name="Venter J.C."/>
        </authorList>
    </citation>
    <scope>NUCLEOTIDE SEQUENCE [LARGE SCALE GENOMIC DNA]</scope>
    <scope>VARIANT ASP-309</scope>
</reference>
<reference key="9">
    <citation type="journal article" date="2004" name="Genome Res.">
        <title>The status, quality, and expansion of the NIH full-length cDNA project: the Mammalian Gene Collection (MGC).</title>
        <authorList>
            <consortium name="The MGC Project Team"/>
        </authorList>
    </citation>
    <scope>NUCLEOTIDE SEQUENCE [LARGE SCALE MRNA]</scope>
    <scope>VARIANT ASP-309</scope>
    <source>
        <tissue>Brain</tissue>
        <tissue>Skin</tissue>
    </source>
</reference>
<reference key="10">
    <citation type="journal article" date="2006" name="Cell">
        <title>Global, in vivo, and site-specific phosphorylation dynamics in signaling networks.</title>
        <authorList>
            <person name="Olsen J.V."/>
            <person name="Blagoev B."/>
            <person name="Gnad F."/>
            <person name="Macek B."/>
            <person name="Kumar C."/>
            <person name="Mortensen P."/>
            <person name="Mann M."/>
        </authorList>
    </citation>
    <scope>PHOSPHORYLATION [LARGE SCALE ANALYSIS] AT SER-117</scope>
    <scope>IDENTIFICATION BY MASS SPECTROMETRY [LARGE SCALE ANALYSIS]</scope>
    <source>
        <tissue>Cervix carcinoma</tissue>
    </source>
</reference>
<reference key="11">
    <citation type="journal article" date="2006" name="Nat. Biotechnol.">
        <title>A probability-based approach for high-throughput protein phosphorylation analysis and site localization.</title>
        <authorList>
            <person name="Beausoleil S.A."/>
            <person name="Villen J."/>
            <person name="Gerber S.A."/>
            <person name="Rush J."/>
            <person name="Gygi S.P."/>
        </authorList>
    </citation>
    <scope>PHOSPHORYLATION [LARGE SCALE ANALYSIS] AT THR-232</scope>
    <scope>IDENTIFICATION BY MASS SPECTROMETRY [LARGE SCALE ANALYSIS]</scope>
    <source>
        <tissue>Cervix carcinoma</tissue>
    </source>
</reference>
<reference key="12">
    <citation type="journal article" date="2008" name="J. Proteome Res.">
        <title>Combining protein-based IMAC, peptide-based IMAC, and MudPIT for efficient phosphoproteomic analysis.</title>
        <authorList>
            <person name="Cantin G.T."/>
            <person name="Yi W."/>
            <person name="Lu B."/>
            <person name="Park S.K."/>
            <person name="Xu T."/>
            <person name="Lee J.-D."/>
            <person name="Yates J.R. III"/>
        </authorList>
    </citation>
    <scope>PHOSPHORYLATION [LARGE SCALE ANALYSIS] AT SER-141</scope>
    <scope>IDENTIFICATION BY MASS SPECTROMETRY [LARGE SCALE ANALYSIS]</scope>
    <source>
        <tissue>Cervix carcinoma</tissue>
    </source>
</reference>
<reference key="13">
    <citation type="journal article" date="2008" name="Proc. Natl. Acad. Sci. U.S.A.">
        <title>A quantitative atlas of mitotic phosphorylation.</title>
        <authorList>
            <person name="Dephoure N."/>
            <person name="Zhou C."/>
            <person name="Villen J."/>
            <person name="Beausoleil S.A."/>
            <person name="Bakalarski C.E."/>
            <person name="Elledge S.J."/>
            <person name="Gygi S.P."/>
        </authorList>
    </citation>
    <scope>PHOSPHORYLATION [LARGE SCALE ANALYSIS] AT SER-21; SER-117; THR-129; SER-141; SER-145; SER-148; SER-184; SER-194; THR-232; SER-324 AND SER-381</scope>
    <scope>IDENTIFICATION BY MASS SPECTROMETRY [LARGE SCALE ANALYSIS]</scope>
    <source>
        <tissue>Cervix carcinoma</tissue>
    </source>
</reference>
<reference key="14">
    <citation type="journal article" date="2009" name="Anal. Chem.">
        <title>Lys-N and trypsin cover complementary parts of the phosphoproteome in a refined SCX-based approach.</title>
        <authorList>
            <person name="Gauci S."/>
            <person name="Helbig A.O."/>
            <person name="Slijper M."/>
            <person name="Krijgsveld J."/>
            <person name="Heck A.J."/>
            <person name="Mohammed S."/>
        </authorList>
    </citation>
    <scope>IDENTIFICATION BY MASS SPECTROMETRY [LARGE SCALE ANALYSIS]</scope>
</reference>
<reference key="15">
    <citation type="journal article" date="2009" name="Sci. Signal.">
        <title>Quantitative phosphoproteomic analysis of T cell receptor signaling reveals system-wide modulation of protein-protein interactions.</title>
        <authorList>
            <person name="Mayya V."/>
            <person name="Lundgren D.H."/>
            <person name="Hwang S.-I."/>
            <person name="Rezaul K."/>
            <person name="Wu L."/>
            <person name="Eng J.K."/>
            <person name="Rodionov V."/>
            <person name="Han D.K."/>
        </authorList>
    </citation>
    <scope>PHOSPHORYLATION [LARGE SCALE ANALYSIS] AT SER-141 AND SER-184</scope>
    <scope>IDENTIFICATION BY MASS SPECTROMETRY [LARGE SCALE ANALYSIS]</scope>
    <source>
        <tissue>Leukemic T-cell</tissue>
    </source>
</reference>
<reference key="16">
    <citation type="journal article" date="2010" name="Sci. Signal.">
        <title>Quantitative phosphoproteomics reveals widespread full phosphorylation site occupancy during mitosis.</title>
        <authorList>
            <person name="Olsen J.V."/>
            <person name="Vermeulen M."/>
            <person name="Santamaria A."/>
            <person name="Kumar C."/>
            <person name="Miller M.L."/>
            <person name="Jensen L.J."/>
            <person name="Gnad F."/>
            <person name="Cox J."/>
            <person name="Jensen T.S."/>
            <person name="Nigg E.A."/>
            <person name="Brunak S."/>
            <person name="Mann M."/>
        </authorList>
    </citation>
    <scope>PHOSPHORYLATION [LARGE SCALE ANALYSIS] AT SER-21; SER-117; SER-141; THR-232; SER-251; SER-330; SER-434; SER-512 AND THR-610</scope>
    <scope>IDENTIFICATION BY MASS SPECTROMETRY [LARGE SCALE ANALYSIS]</scope>
    <source>
        <tissue>Cervix carcinoma</tissue>
    </source>
</reference>
<reference key="17">
    <citation type="journal article" date="2011" name="Sci. Signal.">
        <title>System-wide temporal characterization of the proteome and phosphoproteome of human embryonic stem cell differentiation.</title>
        <authorList>
            <person name="Rigbolt K.T."/>
            <person name="Prokhorova T.A."/>
            <person name="Akimov V."/>
            <person name="Henningsen J."/>
            <person name="Johansen P.T."/>
            <person name="Kratchmarova I."/>
            <person name="Kassem M."/>
            <person name="Mann M."/>
            <person name="Olsen J.V."/>
            <person name="Blagoev B."/>
        </authorList>
    </citation>
    <scope>PHOSPHORYLATION [LARGE SCALE ANALYSIS] AT SER-141; SER-434 AND SER-512</scope>
    <scope>IDENTIFICATION BY MASS SPECTROMETRY [LARGE SCALE ANALYSIS]</scope>
</reference>
<reference key="18">
    <citation type="journal article" date="2013" name="J. Proteome Res.">
        <title>Toward a comprehensive characterization of a human cancer cell phosphoproteome.</title>
        <authorList>
            <person name="Zhou H."/>
            <person name="Di Palma S."/>
            <person name="Preisinger C."/>
            <person name="Peng M."/>
            <person name="Polat A.N."/>
            <person name="Heck A.J."/>
            <person name="Mohammed S."/>
        </authorList>
    </citation>
    <scope>PHOSPHORYLATION [LARGE SCALE ANALYSIS] AT SER-117; SER-141; THR-232; SER-239; SER-251; SER-253; SER-330 AND SER-569</scope>
    <scope>IDENTIFICATION BY MASS SPECTROMETRY [LARGE SCALE ANALYSIS]</scope>
    <source>
        <tissue>Cervix carcinoma</tissue>
        <tissue>Erythroleukemia</tissue>
    </source>
</reference>
<reference key="19">
    <citation type="journal article" date="2014" name="Nat. Struct. Mol. Biol.">
        <title>Uncovering global SUMOylation signaling networks in a site-specific manner.</title>
        <authorList>
            <person name="Hendriks I.A."/>
            <person name="D'Souza R.C."/>
            <person name="Yang B."/>
            <person name="Verlaan-de Vries M."/>
            <person name="Mann M."/>
            <person name="Vertegaal A.C."/>
        </authorList>
    </citation>
    <scope>SUMOYLATION [LARGE SCALE ANALYSIS] AT LYS-558; LYS-626; LYS-649; LYS-658 AND LYS-686</scope>
    <scope>IDENTIFICATION BY MASS SPECTROMETRY [LARGE SCALE ANALYSIS]</scope>
</reference>
<reference key="20">
    <citation type="journal article" date="2015" name="Cell Rep.">
        <title>SUMO-2 orchestrates chromatin modifiers in response to DNA damage.</title>
        <authorList>
            <person name="Hendriks I.A."/>
            <person name="Treffers L.W."/>
            <person name="Verlaan-de Vries M."/>
            <person name="Olsen J.V."/>
            <person name="Vertegaal A.C."/>
        </authorList>
    </citation>
    <scope>SUMOYLATION [LARGE SCALE ANALYSIS] AT LYS-558; LYS-626 AND LYS-658</scope>
    <scope>IDENTIFICATION BY MASS SPECTROMETRY [LARGE SCALE ANALYSIS]</scope>
</reference>
<reference key="21">
    <citation type="journal article" date="2017" name="Nat. Struct. Mol. Biol.">
        <title>Site-specific mapping of the human SUMO proteome reveals co-modification with phosphorylation.</title>
        <authorList>
            <person name="Hendriks I.A."/>
            <person name="Lyon D."/>
            <person name="Young C."/>
            <person name="Jensen L.J."/>
            <person name="Vertegaal A.C."/>
            <person name="Nielsen M.L."/>
        </authorList>
    </citation>
    <scope>SUMOYLATION [LARGE SCALE ANALYSIS] AT LYS-217; LYS-220; LYS-257; LYS-316; LYS-321; LYS-345; LYS-384; LYS-558; LYS-584; LYS-606; LYS-626; LYS-649; LYS-658; LYS-686 AND LYS-731</scope>
    <scope>IDENTIFICATION BY MASS SPECTROMETRY [LARGE SCALE ANALYSIS]</scope>
</reference>
<reference evidence="11 12 13" key="22">
    <citation type="journal article" date="2021" name="Science">
        <title>Nucleolar maturation of the human small subunit processome.</title>
        <authorList>
            <person name="Singh S."/>
            <person name="Vanden Broeck A."/>
            <person name="Miller L."/>
            <person name="Chaker-Margot M."/>
            <person name="Klinge S."/>
        </authorList>
    </citation>
    <scope>STRUCTURE BY ELECTRON MICROSCOPY (2.70 ANGSTROMS)</scope>
    <scope>FUNCTION</scope>
    <scope>SUBUNIT</scope>
    <scope>SUBCELLULAR LOCATION</scope>
</reference>